<dbReference type="EMBL" id="CP001616">
    <property type="protein sequence ID" value="ACQ94091.1"/>
    <property type="molecule type" value="Genomic_DNA"/>
</dbReference>
<dbReference type="RefSeq" id="WP_015879540.1">
    <property type="nucleotide sequence ID" value="NC_012691.1"/>
</dbReference>
<dbReference type="SMR" id="C4LAB6"/>
<dbReference type="STRING" id="595494.Tola_2497"/>
<dbReference type="KEGG" id="tau:Tola_2497"/>
<dbReference type="eggNOG" id="COG0359">
    <property type="taxonomic scope" value="Bacteria"/>
</dbReference>
<dbReference type="HOGENOM" id="CLU_078938_4_1_6"/>
<dbReference type="OrthoDB" id="9788336at2"/>
<dbReference type="Proteomes" id="UP000009073">
    <property type="component" value="Chromosome"/>
</dbReference>
<dbReference type="GO" id="GO:1990904">
    <property type="term" value="C:ribonucleoprotein complex"/>
    <property type="evidence" value="ECO:0007669"/>
    <property type="project" value="UniProtKB-KW"/>
</dbReference>
<dbReference type="GO" id="GO:0005840">
    <property type="term" value="C:ribosome"/>
    <property type="evidence" value="ECO:0007669"/>
    <property type="project" value="UniProtKB-KW"/>
</dbReference>
<dbReference type="GO" id="GO:0019843">
    <property type="term" value="F:rRNA binding"/>
    <property type="evidence" value="ECO:0007669"/>
    <property type="project" value="UniProtKB-UniRule"/>
</dbReference>
<dbReference type="GO" id="GO:0003735">
    <property type="term" value="F:structural constituent of ribosome"/>
    <property type="evidence" value="ECO:0007669"/>
    <property type="project" value="InterPro"/>
</dbReference>
<dbReference type="GO" id="GO:0006412">
    <property type="term" value="P:translation"/>
    <property type="evidence" value="ECO:0007669"/>
    <property type="project" value="UniProtKB-UniRule"/>
</dbReference>
<dbReference type="FunFam" id="3.10.430.100:FF:000001">
    <property type="entry name" value="50S ribosomal protein L9"/>
    <property type="match status" value="1"/>
</dbReference>
<dbReference type="Gene3D" id="3.10.430.100">
    <property type="entry name" value="Ribosomal protein L9, C-terminal domain"/>
    <property type="match status" value="1"/>
</dbReference>
<dbReference type="Gene3D" id="3.40.5.10">
    <property type="entry name" value="Ribosomal protein L9, N-terminal domain"/>
    <property type="match status" value="1"/>
</dbReference>
<dbReference type="HAMAP" id="MF_00503">
    <property type="entry name" value="Ribosomal_bL9"/>
    <property type="match status" value="1"/>
</dbReference>
<dbReference type="InterPro" id="IPR000244">
    <property type="entry name" value="Ribosomal_bL9"/>
</dbReference>
<dbReference type="InterPro" id="IPR009027">
    <property type="entry name" value="Ribosomal_bL9/RNase_H1_N"/>
</dbReference>
<dbReference type="InterPro" id="IPR020594">
    <property type="entry name" value="Ribosomal_bL9_bac/chp"/>
</dbReference>
<dbReference type="InterPro" id="IPR020069">
    <property type="entry name" value="Ribosomal_bL9_C"/>
</dbReference>
<dbReference type="InterPro" id="IPR036791">
    <property type="entry name" value="Ribosomal_bL9_C_sf"/>
</dbReference>
<dbReference type="InterPro" id="IPR020070">
    <property type="entry name" value="Ribosomal_bL9_N"/>
</dbReference>
<dbReference type="InterPro" id="IPR036935">
    <property type="entry name" value="Ribosomal_bL9_N_sf"/>
</dbReference>
<dbReference type="NCBIfam" id="TIGR00158">
    <property type="entry name" value="L9"/>
    <property type="match status" value="1"/>
</dbReference>
<dbReference type="PANTHER" id="PTHR21368">
    <property type="entry name" value="50S RIBOSOMAL PROTEIN L9"/>
    <property type="match status" value="1"/>
</dbReference>
<dbReference type="Pfam" id="PF03948">
    <property type="entry name" value="Ribosomal_L9_C"/>
    <property type="match status" value="1"/>
</dbReference>
<dbReference type="Pfam" id="PF01281">
    <property type="entry name" value="Ribosomal_L9_N"/>
    <property type="match status" value="1"/>
</dbReference>
<dbReference type="SUPFAM" id="SSF55658">
    <property type="entry name" value="L9 N-domain-like"/>
    <property type="match status" value="1"/>
</dbReference>
<dbReference type="SUPFAM" id="SSF55653">
    <property type="entry name" value="Ribosomal protein L9 C-domain"/>
    <property type="match status" value="1"/>
</dbReference>
<dbReference type="PROSITE" id="PS00651">
    <property type="entry name" value="RIBOSOMAL_L9"/>
    <property type="match status" value="1"/>
</dbReference>
<keyword id="KW-1185">Reference proteome</keyword>
<keyword id="KW-0687">Ribonucleoprotein</keyword>
<keyword id="KW-0689">Ribosomal protein</keyword>
<keyword id="KW-0694">RNA-binding</keyword>
<keyword id="KW-0699">rRNA-binding</keyword>
<organism>
    <name type="scientific">Tolumonas auensis (strain DSM 9187 / NBRC 110442 / TA 4)</name>
    <dbReference type="NCBI Taxonomy" id="595494"/>
    <lineage>
        <taxon>Bacteria</taxon>
        <taxon>Pseudomonadati</taxon>
        <taxon>Pseudomonadota</taxon>
        <taxon>Gammaproteobacteria</taxon>
        <taxon>Aeromonadales</taxon>
        <taxon>Aeromonadaceae</taxon>
        <taxon>Tolumonas</taxon>
    </lineage>
</organism>
<feature type="chain" id="PRO_1000206564" description="Large ribosomal subunit protein bL9">
    <location>
        <begin position="1"/>
        <end position="149"/>
    </location>
</feature>
<comment type="function">
    <text evidence="1">Binds to the 23S rRNA.</text>
</comment>
<comment type="similarity">
    <text evidence="1">Belongs to the bacterial ribosomal protein bL9 family.</text>
</comment>
<gene>
    <name evidence="1" type="primary">rplI</name>
    <name type="ordered locus">Tola_2497</name>
</gene>
<reference key="1">
    <citation type="submission" date="2009-05" db="EMBL/GenBank/DDBJ databases">
        <title>Complete sequence of Tolumonas auensis DSM 9187.</title>
        <authorList>
            <consortium name="US DOE Joint Genome Institute"/>
            <person name="Lucas S."/>
            <person name="Copeland A."/>
            <person name="Lapidus A."/>
            <person name="Glavina del Rio T."/>
            <person name="Tice H."/>
            <person name="Bruce D."/>
            <person name="Goodwin L."/>
            <person name="Pitluck S."/>
            <person name="Chertkov O."/>
            <person name="Brettin T."/>
            <person name="Detter J.C."/>
            <person name="Han C."/>
            <person name="Larimer F."/>
            <person name="Land M."/>
            <person name="Hauser L."/>
            <person name="Kyrpides N."/>
            <person name="Mikhailova N."/>
            <person name="Spring S."/>
            <person name="Beller H."/>
        </authorList>
    </citation>
    <scope>NUCLEOTIDE SEQUENCE [LARGE SCALE GENOMIC DNA]</scope>
    <source>
        <strain>DSM 9187 / NBRC 110442 / TA 4</strain>
    </source>
</reference>
<accession>C4LAB6</accession>
<protein>
    <recommendedName>
        <fullName evidence="1">Large ribosomal subunit protein bL9</fullName>
    </recommendedName>
    <alternativeName>
        <fullName evidence="2">50S ribosomal protein L9</fullName>
    </alternativeName>
</protein>
<sequence length="149" mass="15641">MEVILLDKIAHLGDLGDKVVVKSGFARNYLFPQGKAVMATKDNLAAFEARRAELEAKLADVLAAAEARAAQLSALTNVTIATKAGDEGKLFGSVGTRDIADAITAAGVPVAKSEVRMPNGVLRSVGEYDIVVHLHTDVNTTVKVTVVAE</sequence>
<name>RL9_TOLAT</name>
<proteinExistence type="inferred from homology"/>
<evidence type="ECO:0000255" key="1">
    <source>
        <dbReference type="HAMAP-Rule" id="MF_00503"/>
    </source>
</evidence>
<evidence type="ECO:0000305" key="2"/>